<accession>Q02H08</accession>
<comment type="similarity">
    <text evidence="1">Belongs to the universal ribosomal protein uS9 family.</text>
</comment>
<evidence type="ECO:0000255" key="1">
    <source>
        <dbReference type="HAMAP-Rule" id="MF_00532"/>
    </source>
</evidence>
<evidence type="ECO:0000305" key="2"/>
<organism>
    <name type="scientific">Pseudomonas aeruginosa (strain UCBPP-PA14)</name>
    <dbReference type="NCBI Taxonomy" id="208963"/>
    <lineage>
        <taxon>Bacteria</taxon>
        <taxon>Pseudomonadati</taxon>
        <taxon>Pseudomonadota</taxon>
        <taxon>Gammaproteobacteria</taxon>
        <taxon>Pseudomonadales</taxon>
        <taxon>Pseudomonadaceae</taxon>
        <taxon>Pseudomonas</taxon>
    </lineage>
</organism>
<reference key="1">
    <citation type="journal article" date="2006" name="Genome Biol.">
        <title>Genomic analysis reveals that Pseudomonas aeruginosa virulence is combinatorial.</title>
        <authorList>
            <person name="Lee D.G."/>
            <person name="Urbach J.M."/>
            <person name="Wu G."/>
            <person name="Liberati N.T."/>
            <person name="Feinbaum R.L."/>
            <person name="Miyata S."/>
            <person name="Diggins L.T."/>
            <person name="He J."/>
            <person name="Saucier M."/>
            <person name="Deziel E."/>
            <person name="Friedman L."/>
            <person name="Li L."/>
            <person name="Grills G."/>
            <person name="Montgomery K."/>
            <person name="Kucherlapati R."/>
            <person name="Rahme L.G."/>
            <person name="Ausubel F.M."/>
        </authorList>
    </citation>
    <scope>NUCLEOTIDE SEQUENCE [LARGE SCALE GENOMIC DNA]</scope>
    <source>
        <strain>UCBPP-PA14</strain>
    </source>
</reference>
<protein>
    <recommendedName>
        <fullName evidence="1">Small ribosomal subunit protein uS9</fullName>
    </recommendedName>
    <alternativeName>
        <fullName evidence="2">30S ribosomal protein S9</fullName>
    </alternativeName>
</protein>
<dbReference type="EMBL" id="CP000438">
    <property type="protein sequence ID" value="ABJ13701.1"/>
    <property type="molecule type" value="Genomic_DNA"/>
</dbReference>
<dbReference type="RefSeq" id="WP_003098810.1">
    <property type="nucleotide sequence ID" value="NZ_CP034244.1"/>
</dbReference>
<dbReference type="SMR" id="Q02H08"/>
<dbReference type="KEGG" id="pau:PA14_57580"/>
<dbReference type="PseudoCAP" id="PA14_57580"/>
<dbReference type="HOGENOM" id="CLU_046483_2_1_6"/>
<dbReference type="BioCyc" id="PAER208963:G1G74-4850-MONOMER"/>
<dbReference type="Proteomes" id="UP000000653">
    <property type="component" value="Chromosome"/>
</dbReference>
<dbReference type="GO" id="GO:0022627">
    <property type="term" value="C:cytosolic small ribosomal subunit"/>
    <property type="evidence" value="ECO:0007669"/>
    <property type="project" value="TreeGrafter"/>
</dbReference>
<dbReference type="GO" id="GO:0003723">
    <property type="term" value="F:RNA binding"/>
    <property type="evidence" value="ECO:0007669"/>
    <property type="project" value="TreeGrafter"/>
</dbReference>
<dbReference type="GO" id="GO:0003735">
    <property type="term" value="F:structural constituent of ribosome"/>
    <property type="evidence" value="ECO:0007669"/>
    <property type="project" value="InterPro"/>
</dbReference>
<dbReference type="GO" id="GO:0006412">
    <property type="term" value="P:translation"/>
    <property type="evidence" value="ECO:0007669"/>
    <property type="project" value="UniProtKB-UniRule"/>
</dbReference>
<dbReference type="FunFam" id="3.30.230.10:FF:000001">
    <property type="entry name" value="30S ribosomal protein S9"/>
    <property type="match status" value="1"/>
</dbReference>
<dbReference type="Gene3D" id="3.30.230.10">
    <property type="match status" value="1"/>
</dbReference>
<dbReference type="HAMAP" id="MF_00532_B">
    <property type="entry name" value="Ribosomal_uS9_B"/>
    <property type="match status" value="1"/>
</dbReference>
<dbReference type="InterPro" id="IPR020568">
    <property type="entry name" value="Ribosomal_Su5_D2-typ_SF"/>
</dbReference>
<dbReference type="InterPro" id="IPR000754">
    <property type="entry name" value="Ribosomal_uS9"/>
</dbReference>
<dbReference type="InterPro" id="IPR023035">
    <property type="entry name" value="Ribosomal_uS9_bac/plastid"/>
</dbReference>
<dbReference type="InterPro" id="IPR020574">
    <property type="entry name" value="Ribosomal_uS9_CS"/>
</dbReference>
<dbReference type="InterPro" id="IPR014721">
    <property type="entry name" value="Ribsml_uS5_D2-typ_fold_subgr"/>
</dbReference>
<dbReference type="NCBIfam" id="NF001099">
    <property type="entry name" value="PRK00132.1"/>
    <property type="match status" value="1"/>
</dbReference>
<dbReference type="PANTHER" id="PTHR21569">
    <property type="entry name" value="RIBOSOMAL PROTEIN S9"/>
    <property type="match status" value="1"/>
</dbReference>
<dbReference type="PANTHER" id="PTHR21569:SF1">
    <property type="entry name" value="SMALL RIBOSOMAL SUBUNIT PROTEIN US9M"/>
    <property type="match status" value="1"/>
</dbReference>
<dbReference type="Pfam" id="PF00380">
    <property type="entry name" value="Ribosomal_S9"/>
    <property type="match status" value="1"/>
</dbReference>
<dbReference type="SUPFAM" id="SSF54211">
    <property type="entry name" value="Ribosomal protein S5 domain 2-like"/>
    <property type="match status" value="1"/>
</dbReference>
<dbReference type="PROSITE" id="PS00360">
    <property type="entry name" value="RIBOSOMAL_S9"/>
    <property type="match status" value="1"/>
</dbReference>
<keyword id="KW-0687">Ribonucleoprotein</keyword>
<keyword id="KW-0689">Ribosomal protein</keyword>
<proteinExistence type="inferred from homology"/>
<sequence length="130" mass="14615">MSATQNYGTGRRKTATARVFLRPGTGKISINNRGLDQFFGRETARMVVRQPLELTETVEKFDIFVTVVGGGVSGQAGAIRHGITRALIEYDETLRSSLRKAGYVTRDAREVERKKVGLRKARKRPQYSKR</sequence>
<name>RS9_PSEAB</name>
<gene>
    <name evidence="1" type="primary">rpsI</name>
    <name type="ordered locus">PA14_57580</name>
</gene>
<feature type="chain" id="PRO_1000051292" description="Small ribosomal subunit protein uS9">
    <location>
        <begin position="1"/>
        <end position="130"/>
    </location>
</feature>